<name>CENPF_HUMAN</name>
<keyword id="KW-0007">Acetylation</keyword>
<keyword id="KW-0131">Cell cycle</keyword>
<keyword id="KW-0132">Cell division</keyword>
<keyword id="KW-0137">Centromere</keyword>
<keyword id="KW-0158">Chromosome</keyword>
<keyword id="KW-1186">Ciliopathy</keyword>
<keyword id="KW-0175">Coiled coil</keyword>
<keyword id="KW-0963">Cytoplasm</keyword>
<keyword id="KW-0206">Cytoskeleton</keyword>
<keyword id="KW-0217">Developmental protein</keyword>
<keyword id="KW-0221">Differentiation</keyword>
<keyword id="KW-0237">DNA synthesis</keyword>
<keyword id="KW-0995">Kinetochore</keyword>
<keyword id="KW-0449">Lipoprotein</keyword>
<keyword id="KW-0488">Methylation</keyword>
<keyword id="KW-0498">Mitosis</keyword>
<keyword id="KW-0517">Myogenesis</keyword>
<keyword id="KW-0539">Nucleus</keyword>
<keyword id="KW-0597">Phosphoprotein</keyword>
<keyword id="KW-0636">Prenylation</keyword>
<keyword id="KW-0990">Primary ciliary dyskinesia</keyword>
<keyword id="KW-1267">Proteomics identification</keyword>
<keyword id="KW-1185">Reference proteome</keyword>
<keyword id="KW-0677">Repeat</keyword>
<sequence>MSWALEEWKEGLPTRALQKIQELEGQLDKLKKEKQQRQFQLDSLEAALQKQKQKVENEKTEGTNLKRENQRLMEICESLEKTKQKISHELQVKESQVNFQEGQLNSGKKQIEKLEQELKRCKSELERSQQAAQSADVSLNPCNTPQKIFTTPLTPSQYYSGSKYEDLKEKYNKEVEERKRLEAEVKALQAKKASQTLPQATMNHRDIARHQASSSVFSWQQEKTPSHLSSNSQRTPIRRDFSASYFSGEQEVTPSRSTLQIGKRDANSSFFDNSSSPHLLDQLKAQNQELRNKINELELRLQGHEKEMKGQVNKFQELQLQLEKAKVELIEKEKVLNKCRDELVRTTAQYDQASTKYTALEQKLKKLTEDLSCQRQNAESARCSLEQKIKEKEKEFQEELSRQQRSFQTLDQECIQMKARLTQELQQAKNMHNVLQAELDKLTSVKQQLENNLEEFKQKLCRAEQAFQASQIKENELRRSMEEMKKENNLLKSHSEQKAREVCHLEAELKNIKQCLNQSQNFAEEMKAKNTSQETMLRDLQEKINQQENSLTLEKLKLAVADLEKQRDCSQDLLKKREHHIEQLNDKLSKTEKESKALLSALELKKKEYEELKEEKTLFSCWKSENEKLLTQMESEKENLQSKINHLETCLKTQQIKSHEYNERVRTLEMDRENLSVEIRNLHNVLDSKSVEVETQKLAYMELQQKAEFSDQKHQKEIENMCLKTSQLTGQVEDLEHKLQLLSNEIMDKDRCYQDLHAEYESLRDLLKSKDASLVTNEDHQRSLLAFDQQPAMHHSFANIIGEQGSMPSERSECRLEADQSPKNSAILQNRVDSLEFSLESQKQMNSDLQKQCEELVQIKGEIEENLMKAEQMHQSFVAETSQRISKLQEDTSAHQNVVAETLSALENKEKELQLLNDKVETEQAEIQELKKSNHLLEDSLKELQLLSETLSLEKKEMSSIISLNKREIEELTQENGTLKEINASLNQEKMNLIQKSESFANYIDEREKSISELSDQYKQEKLILLQRCEETGNAYEDLSQKYKAAQEKNSKLECLLNECTSLCENRKNELEQLKEAFAKEHQEFLTKLAFAEERNQNLMLELETVQQALRSEMTDNQNNSKSEAGGLKQEIMTLKEEQNKMQKEVNDLLQENEQLMKVMKTKHECQNLESEPIRNSVKERESERNQCNFKPQMDLEVKEISLDSYNAQLVQLEAMLRNKELKLQESEKEKECLQHELQTIRGDLETSNLQDMQSQEISGLKDCEIDAEEKYISGPHELSTSQNDNAHLQCSLQTTMNKLNELEKICEILQAEKYELVTELNDSRSECITATRKMAEEVGKLLNEVKILNDDSGLLHGELVEDIPGGEFGEQPNEQHPVSLAPLDESNSYEHLTLSDKEVQMHFAELQEKFLSLQSEHKILHDQHCQMSSKMSELQTYVDSLKAENLVLSTNLRNFQGDLVKEMQLGLEEGLVPSLSSSCVPDSSSLSSLGDSSFYRALLEQTGDMSLLSNLEGAVSANQCSVDEVFCSSLQEENLTRKETPSAPAKGVEELESLCEVYRQSLEKLEEKMESQGIMKNKEIQELEQLLSSERQELDCLRKQYLSENEQWQQKLTSVTLEMESKLAAEKKQTEQLSLELEVARLQLQGLDLSSRSLLGIDTEDAIQGRNESCDISKEHTSETTERTPKHDVHQICDKDAQQDLNLDIEKITETGAVKPTGECSGEQSPDTNYEPPGEDKTQGSSECISELSFSGPNALVPMDFLGNQEDIHNLQLRVKETSNENLRLLHVIEDRDRKVESLLNEMKELDSKLHLQEVQLMTKIEACIELEKIVGELKKENSDLSEKLEYFSCDHQELLQRVETSEGLNSDLEMHADKSSREDIGDNVAKVNDSWKERFLDVENELSRIRSEKASIEHEALYLEADLEVVQTEKLCLEKDNENKQKVIVCLEEELSVVTSERNQLRGELDTMSKKTTALDQLSEKMKEKTQELESHQSECLHCIQVAEAEVKEKTELLQTLSSDVSELLKDKTHLQEKLQSLEKDSQALSLTKCELENQIAQLNKEKELLVKESESLQARLSESDYEKLNVSKALEAALVEKGEFALRLSSTQEEVHQLRRGIEKLRVRIEADEKKQLHIAEKLKERERENDSLKDKVENLERELQMSEENQELVILDAENSKAEVETLKTQIEEMARSLKVFELDLVTLRSEKENLTKQIQEKQGQLSELDKLLSSFKSLLEEKEQAEIQIKEESKTAVEMLQNQLKELNEAVAALCGDQEIMKATEQSLDPPIEEEHQLRNSIEKLRARLEADEKKQLCVLQQLKESEHHADLLKGRVENLERELEIARTNQEHAALEAENSKGEVETLKAKIEGMTQSLRGLELDVVTIRSEKENLTNELQKEQERISELEIINSSFENILQEKEQEKVQMKEKSSTAMEMLQTQLKELNERVAALHNDQEACKAKEQNLSSQVECLELEKAQLLQGLDEAKNNYIVLQSSVNGLIQEVEDGKQKLEKKDEEISRLKNQIQDQEQLVSKLSQVEGEHQLWKEQNLELRNLTVELEQKIQVLQSKNASLQDTLEVLQSSYKNLENELELTKMDKMSFVEKVNKMTAKETELQREMHEMAQKTAELQEELSGEKNRLAGELQLLLEEIKSSKDQLKELTLENSELKKSLDCMHKDQVEKEGKVREEIAEYQLRLHEAEKKHQALLLDTNKQYEVEIQTYREKLTSKEECLSSQKLEIDLLKSSKEELNNSLKATTQILEELKKTKMDNLKYVNQLKKENERAQGKMKLLIKSCKQLEEEKEILQKELSQLQAAQEKQKTGTVMDTKVDELTTEIKELKETLEEKTKEADEYLDKYCSLLISHEKLEKAKEMLETQVAHLCSQQSKQDSRGSPLLGPVVPGPSPIPSVTEKRLSSGQNKASGKRQRSSGIWENGRGPTPATPESFSKKSKKAVMSGIHPAEDTEGTEFEPEGLPEVVKKGFADIPTGKTSPYILRRTTMATRTSPRLAAQKLALSPLSLGKENLAESSKPTAGGSRSQKVKVAQRSPVDSGTILREPTTKSVPVNNLPERSPTDSPREGLRVKRGRLVPSPKAGLESNGSENCKVQ</sequence>
<comment type="function">
    <text evidence="5 6 9 12">Required for kinetochore function and chromosome segregation in mitosis. Required for kinetochore localization of dynein, LIS1, NDE1 and NDEL1. Regulates recycling of the plasma membrane by acting as a link between recycling vesicles and the microtubule network though its association with STX4 and SNAP25. Acts as a potential inhibitor of pocket protein-mediated cellular processes during development by regulating the activity of RB proteins during cell division and proliferation. May play a regulatory or permissive role in the normal embryonic cardiomyocyte cell cycle and in promoting continued mitosis in transformed, abnormally dividing neonatal cardiomyocytes. Interaction with RB directs embryonic stem cells toward a cardiac lineage. Involved in the regulation of DNA synthesis and hence cell cycle progression, via its C-terminus. Has a potential role regulating skeletal myogenesis and in cell differentiation in embryogenesis. Involved in dendritic cell regulation of T-cell immunity against chlamydia.</text>
</comment>
<comment type="subunit">
    <text evidence="1 6 11 12 13">Interacts with and STX4 (via C-terminus) (By similarity). Interacts (via N-terminus) with RBL1, RBL2 and SNAP25 (By similarity). Self-associates. Interacts with CENP-E and BUBR1 (via C-terminus). Interacts (via C-terminus) with NDE1, NDEL1 and RB1.</text>
</comment>
<comment type="interaction">
    <interactant intactId="EBI-968343">
        <id>P49454</id>
    </interactant>
    <interactant intactId="EBI-928842">
        <id>Q9GZM8</id>
        <label>NDEL1</label>
    </interactant>
    <organismsDiffer>false</organismsDiffer>
    <experiments>6</experiments>
</comment>
<comment type="interaction">
    <interactant intactId="EBI-968343">
        <id>P49454</id>
    </interactant>
    <interactant intactId="EBI-295695">
        <id>Q8WUM0</id>
        <label>NUP133</label>
    </interactant>
    <organismsDiffer>false</organismsDiffer>
    <experiments>2</experiments>
</comment>
<comment type="subcellular location">
    <subcellularLocation>
        <location>Cytoplasm</location>
        <location>Perinuclear region</location>
    </subcellularLocation>
    <subcellularLocation>
        <location>Nucleus matrix</location>
    </subcellularLocation>
    <subcellularLocation>
        <location>Chromosome</location>
        <location>Centromere</location>
        <location>Kinetochore</location>
    </subcellularLocation>
    <subcellularLocation>
        <location>Cytoplasm</location>
        <location>Cytoskeleton</location>
        <location>Spindle</location>
    </subcellularLocation>
    <text>Relocalizes to the kinetochore/centromere (coronal surface of the outer plate) and the spindle during mitosis. Observed in nucleus during interphase but not in the nucleolus. At metaphase becomes localized to areas including kinetochore and mitotic apparatus as well as cytoplasm. By telophase, is concentrated within the intracellular bridge at either side of the mid-body.</text>
</comment>
<comment type="developmental stage">
    <text evidence="9">Gradually accumulates during the cell cycle, reaching peak levels in G2 and M phase, and is rapidly degraded upon completion of mitosis.</text>
</comment>
<comment type="PTM">
    <text>Hyperphosphorylated during mitosis.</text>
</comment>
<comment type="disease" evidence="7 8">
    <disease id="DI-04686">
        <name>Stromme syndrome</name>
        <acronym>STROMS</acronym>
        <description>An autosomal recessive congenital disorder characterized by intestinal atresia, ocular anomalies, microcephaly, and renal and cardiac abnormalities in some patients. The disease has features of a ciliopathy, and lethality in early childhood is observed in severe cases.</description>
        <dbReference type="MIM" id="243605"/>
    </disease>
    <text>The disease is caused by variants affecting the gene represented in this entry.</text>
</comment>
<comment type="similarity">
    <text evidence="14">Belongs to the centromere protein F family.</text>
</comment>
<comment type="sequence caution" evidence="14">
    <conflict type="miscellaneous discrepancy">
        <sequence resource="EMBL-CDS" id="AAA82889"/>
    </conflict>
    <text>Probable cloning artifact.</text>
</comment>
<comment type="online information" name="Atlas of Genetics and Cytogenetics in Oncology and Haematology">
    <link uri="https://atlasgeneticsoncology.org/gene/40057/CENPF"/>
</comment>
<reference key="1">
    <citation type="journal article" date="1995" name="J. Cell Biol.">
        <title>CENP-F is a protein of the nuclear matrix that assembles onto kinetochores at late G2 and is rapidly degraded after mitosis.</title>
        <authorList>
            <person name="Liao H."/>
            <person name="Winkfein R.J."/>
            <person name="Mack G."/>
            <person name="Rattner J.B."/>
            <person name="Yen T.J."/>
        </authorList>
    </citation>
    <scope>NUCLEOTIDE SEQUENCE [MRNA]</scope>
    <scope>FUNCTION</scope>
    <scope>SUBCELLULAR LOCATION</scope>
    <scope>DEVELOPMENTAL STAGE</scope>
    <scope>VARIANTS LEU-250; GLY-272 AND LYS-3106</scope>
    <source>
        <tissue>Mammary carcinoma</tissue>
    </source>
</reference>
<reference key="2">
    <citation type="journal article" date="1995" name="Mol. Cell. Biol.">
        <title>Characterization of a novel 350-kilodalton nuclear phosphoprotein that is specifically involved in mitotic-phase progression.</title>
        <authorList>
            <person name="Zhu X."/>
            <person name="Mancini M.A."/>
            <person name="Chang K.-H."/>
            <person name="Liu C.-Y."/>
            <person name="Chen C.-F."/>
            <person name="Shan B."/>
            <person name="Jones D."/>
            <person name="Yang-Feng T.L."/>
            <person name="Lee W.-H."/>
        </authorList>
    </citation>
    <scope>NUCLEOTIDE SEQUENCE [MRNA]</scope>
    <scope>FUNCTION</scope>
    <scope>INTERACTION WITH RB1</scope>
    <scope>SUBCELLULAR LOCATION</scope>
    <scope>VARIANT LYS-3106</scope>
</reference>
<reference key="3">
    <citation type="journal article" date="2006" name="Nature">
        <title>The DNA sequence and biological annotation of human chromosome 1.</title>
        <authorList>
            <person name="Gregory S.G."/>
            <person name="Barlow K.F."/>
            <person name="McLay K.E."/>
            <person name="Kaul R."/>
            <person name="Swarbreck D."/>
            <person name="Dunham A."/>
            <person name="Scott C.E."/>
            <person name="Howe K.L."/>
            <person name="Woodfine K."/>
            <person name="Spencer C.C.A."/>
            <person name="Jones M.C."/>
            <person name="Gillson C."/>
            <person name="Searle S."/>
            <person name="Zhou Y."/>
            <person name="Kokocinski F."/>
            <person name="McDonald L."/>
            <person name="Evans R."/>
            <person name="Phillips K."/>
            <person name="Atkinson A."/>
            <person name="Cooper R."/>
            <person name="Jones C."/>
            <person name="Hall R.E."/>
            <person name="Andrews T.D."/>
            <person name="Lloyd C."/>
            <person name="Ainscough R."/>
            <person name="Almeida J.P."/>
            <person name="Ambrose K.D."/>
            <person name="Anderson F."/>
            <person name="Andrew R.W."/>
            <person name="Ashwell R.I.S."/>
            <person name="Aubin K."/>
            <person name="Babbage A.K."/>
            <person name="Bagguley C.L."/>
            <person name="Bailey J."/>
            <person name="Beasley H."/>
            <person name="Bethel G."/>
            <person name="Bird C.P."/>
            <person name="Bray-Allen S."/>
            <person name="Brown J.Y."/>
            <person name="Brown A.J."/>
            <person name="Buckley D."/>
            <person name="Burton J."/>
            <person name="Bye J."/>
            <person name="Carder C."/>
            <person name="Chapman J.C."/>
            <person name="Clark S.Y."/>
            <person name="Clarke G."/>
            <person name="Clee C."/>
            <person name="Cobley V."/>
            <person name="Collier R.E."/>
            <person name="Corby N."/>
            <person name="Coville G.J."/>
            <person name="Davies J."/>
            <person name="Deadman R."/>
            <person name="Dunn M."/>
            <person name="Earthrowl M."/>
            <person name="Ellington A.G."/>
            <person name="Errington H."/>
            <person name="Frankish A."/>
            <person name="Frankland J."/>
            <person name="French L."/>
            <person name="Garner P."/>
            <person name="Garnett J."/>
            <person name="Gay L."/>
            <person name="Ghori M.R.J."/>
            <person name="Gibson R."/>
            <person name="Gilby L.M."/>
            <person name="Gillett W."/>
            <person name="Glithero R.J."/>
            <person name="Grafham D.V."/>
            <person name="Griffiths C."/>
            <person name="Griffiths-Jones S."/>
            <person name="Grocock R."/>
            <person name="Hammond S."/>
            <person name="Harrison E.S.I."/>
            <person name="Hart E."/>
            <person name="Haugen E."/>
            <person name="Heath P.D."/>
            <person name="Holmes S."/>
            <person name="Holt K."/>
            <person name="Howden P.J."/>
            <person name="Hunt A.R."/>
            <person name="Hunt S.E."/>
            <person name="Hunter G."/>
            <person name="Isherwood J."/>
            <person name="James R."/>
            <person name="Johnson C."/>
            <person name="Johnson D."/>
            <person name="Joy A."/>
            <person name="Kay M."/>
            <person name="Kershaw J.K."/>
            <person name="Kibukawa M."/>
            <person name="Kimberley A.M."/>
            <person name="King A."/>
            <person name="Knights A.J."/>
            <person name="Lad H."/>
            <person name="Laird G."/>
            <person name="Lawlor S."/>
            <person name="Leongamornlert D.A."/>
            <person name="Lloyd D.M."/>
            <person name="Loveland J."/>
            <person name="Lovell J."/>
            <person name="Lush M.J."/>
            <person name="Lyne R."/>
            <person name="Martin S."/>
            <person name="Mashreghi-Mohammadi M."/>
            <person name="Matthews L."/>
            <person name="Matthews N.S.W."/>
            <person name="McLaren S."/>
            <person name="Milne S."/>
            <person name="Mistry S."/>
            <person name="Moore M.J.F."/>
            <person name="Nickerson T."/>
            <person name="O'Dell C.N."/>
            <person name="Oliver K."/>
            <person name="Palmeiri A."/>
            <person name="Palmer S.A."/>
            <person name="Parker A."/>
            <person name="Patel D."/>
            <person name="Pearce A.V."/>
            <person name="Peck A.I."/>
            <person name="Pelan S."/>
            <person name="Phelps K."/>
            <person name="Phillimore B.J."/>
            <person name="Plumb R."/>
            <person name="Rajan J."/>
            <person name="Raymond C."/>
            <person name="Rouse G."/>
            <person name="Saenphimmachak C."/>
            <person name="Sehra H.K."/>
            <person name="Sheridan E."/>
            <person name="Shownkeen R."/>
            <person name="Sims S."/>
            <person name="Skuce C.D."/>
            <person name="Smith M."/>
            <person name="Steward C."/>
            <person name="Subramanian S."/>
            <person name="Sycamore N."/>
            <person name="Tracey A."/>
            <person name="Tromans A."/>
            <person name="Van Helmond Z."/>
            <person name="Wall M."/>
            <person name="Wallis J.M."/>
            <person name="White S."/>
            <person name="Whitehead S.L."/>
            <person name="Wilkinson J.E."/>
            <person name="Willey D.L."/>
            <person name="Williams H."/>
            <person name="Wilming L."/>
            <person name="Wray P.W."/>
            <person name="Wu Z."/>
            <person name="Coulson A."/>
            <person name="Vaudin M."/>
            <person name="Sulston J.E."/>
            <person name="Durbin R.M."/>
            <person name="Hubbard T."/>
            <person name="Wooster R."/>
            <person name="Dunham I."/>
            <person name="Carter N.P."/>
            <person name="McVean G."/>
            <person name="Ross M.T."/>
            <person name="Harrow J."/>
            <person name="Olson M.V."/>
            <person name="Beck S."/>
            <person name="Rogers J."/>
            <person name="Bentley D.R."/>
        </authorList>
    </citation>
    <scope>NUCLEOTIDE SEQUENCE [LARGE SCALE GENOMIC DNA]</scope>
</reference>
<reference key="4">
    <citation type="journal article" date="2004" name="Genome Res.">
        <title>The status, quality, and expansion of the NIH full-length cDNA project: the Mammalian Gene Collection (MGC).</title>
        <authorList>
            <consortium name="The MGC Project Team"/>
        </authorList>
    </citation>
    <scope>NUCLEOTIDE SEQUENCE [LARGE SCALE MRNA]</scope>
</reference>
<reference key="5">
    <citation type="journal article" date="1995" name="Biochem. Biophys. Res. Commun.">
        <title>A novel cell-cycle-dependent 350-kDa nuclear protein: C-terminal domain sufficient for nuclear localization.</title>
        <authorList>
            <person name="Li Q."/>
            <person name="Ke Y."/>
            <person name="Kapp J.A."/>
            <person name="Fertig N."/>
            <person name="Medsger T.A. Jr."/>
            <person name="Joshi H.C."/>
        </authorList>
    </citation>
    <scope>NUCLEOTIDE SEQUENCE [MRNA] OF 2098-3114</scope>
    <scope>SUBCELLULAR LOCATION</scope>
    <scope>NUCLEAR LOCALIZATION SIGNAL</scope>
    <scope>VARIANT LYS-3106</scope>
</reference>
<reference key="6">
    <citation type="journal article" date="1995" name="J. Biol. Chem.">
        <title>The C-terminus of mitosin is essential for its nuclear localization, centromere/kinetochore targeting, and dimerization.</title>
        <authorList>
            <person name="Zhu X."/>
            <person name="Chang K.-H."/>
            <person name="He D."/>
            <person name="Mancini M.A."/>
            <person name="Brinkley W.R."/>
            <person name="Lee W.-H."/>
        </authorList>
    </citation>
    <scope>SUBUNIT</scope>
    <scope>SUBCELLULAR LOCATION</scope>
    <scope>NUCLEAR LOCALIZATION SIGNAL</scope>
</reference>
<reference key="7">
    <citation type="journal article" date="1998" name="J. Cell Biol.">
        <title>Characterization of the kinetochore binding domain of CENP-E reveals interactions with the kinetochore proteins CENP-F and hBUBR1.</title>
        <authorList>
            <person name="Chan G.K.T."/>
            <person name="Schaar B.T."/>
            <person name="Yen T.J."/>
        </authorList>
    </citation>
    <scope>INTERACTION WITH BUBR1 AND CENPE</scope>
    <scope>SUBCELLULAR LOCATION</scope>
</reference>
<reference key="8">
    <citation type="journal article" date="2000" name="J. Biol. Chem.">
        <title>Farnesyl transferase inhibitors block the farnesylation of CENP-E and CENP-F and alter the association of CENP-E with the microtubules.</title>
        <authorList>
            <person name="Ashar H.R."/>
            <person name="James L."/>
            <person name="Gray K."/>
            <person name="Carr D."/>
            <person name="Black S."/>
            <person name="Armstrong L."/>
            <person name="Bishop W.R."/>
            <person name="Kirschmeier P."/>
        </authorList>
    </citation>
    <scope>ISOPRENYLATION AT CYS-3111</scope>
</reference>
<reference key="9">
    <citation type="journal article" date="2003" name="Cell Res.">
        <title>Mitosin/CENP-F is a conserved kinetochore protein subjected to cytoplasmic dynein-mediated poleward transport.</title>
        <authorList>
            <person name="Yang Z.Y."/>
            <person name="Guo J."/>
            <person name="Li N."/>
            <person name="Qian M."/>
            <person name="Wang S.N."/>
            <person name="Zhu X.L."/>
        </authorList>
    </citation>
    <scope>FUNCTION</scope>
    <scope>SUBCELLULAR LOCATION</scope>
</reference>
<reference key="10">
    <citation type="journal article" date="2006" name="Cell">
        <title>Global, in vivo, and site-specific phosphorylation dynamics in signaling networks.</title>
        <authorList>
            <person name="Olsen J.V."/>
            <person name="Blagoev B."/>
            <person name="Gnad F."/>
            <person name="Macek B."/>
            <person name="Kumar C."/>
            <person name="Mortensen P."/>
            <person name="Mann M."/>
        </authorList>
    </citation>
    <scope>IDENTIFICATION BY MASS SPECTROMETRY [LARGE SCALE ANALYSIS]</scope>
    <source>
        <tissue>Cervix carcinoma</tissue>
    </source>
</reference>
<reference key="11">
    <citation type="journal article" date="2006" name="Nat. Biotechnol.">
        <title>A probability-based approach for high-throughput protein phosphorylation analysis and site localization.</title>
        <authorList>
            <person name="Beausoleil S.A."/>
            <person name="Villen J."/>
            <person name="Gerber S.A."/>
            <person name="Rush J."/>
            <person name="Gygi S.P."/>
        </authorList>
    </citation>
    <scope>PHOSPHORYLATION [LARGE SCALE ANALYSIS] AT SER-1651 AND SER-1654</scope>
    <scope>IDENTIFICATION BY MASS SPECTROMETRY [LARGE SCALE ANALYSIS]</scope>
    <source>
        <tissue>Cervix carcinoma</tissue>
    </source>
</reference>
<reference key="12">
    <citation type="journal article" date="2007" name="Curr. Biol.">
        <title>Cenp-F links kinetochores to Ndel1/Nde1/Lis1/dynein microtubule motor complexes.</title>
        <authorList>
            <person name="Vergnolle M.A.S."/>
            <person name="Taylor S.S."/>
        </authorList>
    </citation>
    <scope>FUNCTION</scope>
    <scope>INTERACTION WITH NDEL1 AND NDE1</scope>
    <scope>SUBCELLULAR LOCATION</scope>
</reference>
<reference key="13">
    <citation type="journal article" date="2007" name="J. Proteome Res.">
        <title>Improved titanium dioxide enrichment of phosphopeptides from HeLa cells and high confident phosphopeptide identification by cross-validation of MS/MS and MS/MS/MS spectra.</title>
        <authorList>
            <person name="Yu L.R."/>
            <person name="Zhu Z."/>
            <person name="Chan K.C."/>
            <person name="Issaq H.J."/>
            <person name="Dimitrov D.S."/>
            <person name="Veenstra T.D."/>
        </authorList>
    </citation>
    <scope>PHOSPHORYLATION [LARGE SCALE ANALYSIS] AT SER-3023</scope>
    <scope>IDENTIFICATION BY MASS SPECTROMETRY [LARGE SCALE ANALYSIS]</scope>
    <source>
        <tissue>Cervix carcinoma</tissue>
    </source>
</reference>
<reference key="14">
    <citation type="journal article" date="2007" name="Science">
        <title>ATM and ATR substrate analysis reveals extensive protein networks responsive to DNA damage.</title>
        <authorList>
            <person name="Matsuoka S."/>
            <person name="Ballif B.A."/>
            <person name="Smogorzewska A."/>
            <person name="McDonald E.R. III"/>
            <person name="Hurov K.E."/>
            <person name="Luo J."/>
            <person name="Bakalarski C.E."/>
            <person name="Zhao Z."/>
            <person name="Solimini N."/>
            <person name="Lerenthal Y."/>
            <person name="Shiloh Y."/>
            <person name="Gygi S.P."/>
            <person name="Elledge S.J."/>
        </authorList>
    </citation>
    <scope>IDENTIFICATION BY MASS SPECTROMETRY [LARGE SCALE ANALYSIS]</scope>
    <source>
        <tissue>Embryonic kidney</tissue>
    </source>
</reference>
<reference key="15">
    <citation type="journal article" date="2008" name="J. Proteome Res.">
        <title>Combining protein-based IMAC, peptide-based IMAC, and MudPIT for efficient phosphoproteomic analysis.</title>
        <authorList>
            <person name="Cantin G.T."/>
            <person name="Yi W."/>
            <person name="Lu B."/>
            <person name="Park S.K."/>
            <person name="Xu T."/>
            <person name="Lee J.-D."/>
            <person name="Yates J.R. III"/>
        </authorList>
    </citation>
    <scope>PHOSPHORYLATION [LARGE SCALE ANALYSIS] AT SER-3054</scope>
    <scope>IDENTIFICATION BY MASS SPECTROMETRY [LARGE SCALE ANALYSIS]</scope>
    <source>
        <tissue>Cervix carcinoma</tissue>
    </source>
</reference>
<reference key="16">
    <citation type="journal article" date="2008" name="Proc. Natl. Acad. Sci. U.S.A.">
        <title>A quantitative atlas of mitotic phosphorylation.</title>
        <authorList>
            <person name="Dephoure N."/>
            <person name="Zhou C."/>
            <person name="Villen J."/>
            <person name="Beausoleil S.A."/>
            <person name="Bakalarski C.E."/>
            <person name="Elledge S.J."/>
            <person name="Gygi S.P."/>
        </authorList>
    </citation>
    <scope>PHOSPHORYLATION [LARGE SCALE ANALYSIS] AT SER-106; THR-144; SER-834; SER-1248; SER-1651; SER-1652; SER-1654; SER-2416; SER-2417; SER-2900; SER-2911; SER-3023; SER-3026; SER-3054; SER-3079 AND SER-3083</scope>
    <scope>IDENTIFICATION BY MASS SPECTROMETRY [LARGE SCALE ANALYSIS]</scope>
    <source>
        <tissue>Cervix carcinoma</tissue>
    </source>
</reference>
<reference key="17">
    <citation type="journal article" date="2009" name="Anal. Chem.">
        <title>Lys-N and trypsin cover complementary parts of the phosphoproteome in a refined SCX-based approach.</title>
        <authorList>
            <person name="Gauci S."/>
            <person name="Helbig A.O."/>
            <person name="Slijper M."/>
            <person name="Krijgsveld J."/>
            <person name="Heck A.J."/>
            <person name="Mohammed S."/>
        </authorList>
    </citation>
    <scope>IDENTIFICATION BY MASS SPECTROMETRY [LARGE SCALE ANALYSIS]</scope>
</reference>
<reference key="18">
    <citation type="journal article" date="2009" name="Sci. Signal.">
        <title>Quantitative phosphoproteomic analysis of T cell receptor signaling reveals system-wide modulation of protein-protein interactions.</title>
        <authorList>
            <person name="Mayya V."/>
            <person name="Lundgren D.H."/>
            <person name="Hwang S.-I."/>
            <person name="Rezaul K."/>
            <person name="Wu L."/>
            <person name="Eng J.K."/>
            <person name="Rodionov V."/>
            <person name="Han D.K."/>
        </authorList>
    </citation>
    <scope>PHOSPHORYLATION [LARGE SCALE ANALYSIS] AT SER-2900 AND SER-2911</scope>
    <scope>IDENTIFICATION BY MASS SPECTROMETRY [LARGE SCALE ANALYSIS]</scope>
    <source>
        <tissue>Leukemic T-cell</tissue>
    </source>
</reference>
<reference key="19">
    <citation type="journal article" date="2009" name="Science">
        <title>Lysine acetylation targets protein complexes and co-regulates major cellular functions.</title>
        <authorList>
            <person name="Choudhary C."/>
            <person name="Kumar C."/>
            <person name="Gnad F."/>
            <person name="Nielsen M.L."/>
            <person name="Rehman M."/>
            <person name="Walther T.C."/>
            <person name="Olsen J.V."/>
            <person name="Mann M."/>
        </authorList>
    </citation>
    <scope>ACETYLATION [LARGE SCALE ANALYSIS] AT LYS-2779</scope>
    <scope>IDENTIFICATION BY MASS SPECTROMETRY [LARGE SCALE ANALYSIS]</scope>
</reference>
<reference key="20">
    <citation type="journal article" date="2010" name="Sci. Signal.">
        <title>Quantitative phosphoproteomics reveals widespread full phosphorylation site occupancy during mitosis.</title>
        <authorList>
            <person name="Olsen J.V."/>
            <person name="Vermeulen M."/>
            <person name="Santamaria A."/>
            <person name="Kumar C."/>
            <person name="Miller M.L."/>
            <person name="Jensen L.J."/>
            <person name="Gnad F."/>
            <person name="Cox J."/>
            <person name="Jensen T.S."/>
            <person name="Nigg E.A."/>
            <person name="Brunak S."/>
            <person name="Mann M."/>
        </authorList>
    </citation>
    <scope>PHOSPHORYLATION [LARGE SCALE ANALYSIS] AT THR-151; THR-154; TYR-158; SER-276; SER-773; SER-783; SER-821; SER-876; SER-1248; SER-1255; SER-1259; SER-1651; SER-1654; SER-1892; SER-2417; SER-2900; SER-2911; SER-2922; THR-2949; SER-2952; SER-2998; SER-3023; SER-3026; SER-3054; SER-3079 AND SER-3083</scope>
    <scope>IDENTIFICATION BY MASS SPECTROMETRY [LARGE SCALE ANALYSIS]</scope>
    <source>
        <tissue>Cervix carcinoma</tissue>
    </source>
</reference>
<reference key="21">
    <citation type="journal article" date="2011" name="BMC Syst. Biol.">
        <title>Initial characterization of the human central proteome.</title>
        <authorList>
            <person name="Burkard T.R."/>
            <person name="Planyavsky M."/>
            <person name="Kaupe I."/>
            <person name="Breitwieser F.P."/>
            <person name="Buerckstuemmer T."/>
            <person name="Bennett K.L."/>
            <person name="Superti-Furga G."/>
            <person name="Colinge J."/>
        </authorList>
    </citation>
    <scope>IDENTIFICATION BY MASS SPECTROMETRY [LARGE SCALE ANALYSIS]</scope>
</reference>
<reference key="22">
    <citation type="journal article" date="2011" name="Sci. Signal.">
        <title>System-wide temporal characterization of the proteome and phosphoproteome of human embryonic stem cell differentiation.</title>
        <authorList>
            <person name="Rigbolt K.T."/>
            <person name="Prokhorova T.A."/>
            <person name="Akimov V."/>
            <person name="Henningsen J."/>
            <person name="Johansen P.T."/>
            <person name="Kratchmarova I."/>
            <person name="Kassem M."/>
            <person name="Mann M."/>
            <person name="Olsen J.V."/>
            <person name="Blagoev B."/>
        </authorList>
    </citation>
    <scope>PHOSPHORYLATION [LARGE SCALE ANALYSIS] AT SER-3023 AND SER-3054</scope>
    <scope>IDENTIFICATION BY MASS SPECTROMETRY [LARGE SCALE ANALYSIS]</scope>
</reference>
<reference key="23">
    <citation type="journal article" date="2013" name="J. Proteome Res.">
        <title>Toward a comprehensive characterization of a human cancer cell phosphoproteome.</title>
        <authorList>
            <person name="Zhou H."/>
            <person name="Di Palma S."/>
            <person name="Preisinger C."/>
            <person name="Peng M."/>
            <person name="Polat A.N."/>
            <person name="Heck A.J."/>
            <person name="Mohammed S."/>
        </authorList>
    </citation>
    <scope>PHOSPHORYLATION [LARGE SCALE ANALYSIS] AT SER-106; THR-154; SER-242; SER-276; SER-821; SER-838; SER-876; SER-1255; SER-1651; SER-1654; SER-1726; THR-1862; SER-1868; SER-2936; THR-2949; SER-2998; SER-3023; SER-3054 AND SER-3079</scope>
    <scope>IDENTIFICATION BY MASS SPECTROMETRY [LARGE SCALE ANALYSIS]</scope>
    <source>
        <tissue>Cervix carcinoma</tissue>
        <tissue>Erythroleukemia</tissue>
    </source>
</reference>
<reference key="24">
    <citation type="journal article" date="2015" name="J. Med. Genet.">
        <title>The kinetochore protein, CENPF, is mutated in human ciliopathy and microcephaly phenotypes.</title>
        <authorList>
            <person name="Waters A.M."/>
            <person name="Asfahani R."/>
            <person name="Carroll P."/>
            <person name="Bicknell L."/>
            <person name="Lescai F."/>
            <person name="Bright A."/>
            <person name="Chanudet E."/>
            <person name="Brooks A."/>
            <person name="Christou-Savina S."/>
            <person name="Osman G."/>
            <person name="Walsh P."/>
            <person name="Bacchelli C."/>
            <person name="Chapgier A."/>
            <person name="Vernay B."/>
            <person name="Bader D.M."/>
            <person name="Deshpande C."/>
            <person name="O'Sullivan M."/>
            <person name="Ocaka L."/>
            <person name="Stanescu H."/>
            <person name="Stewart H.S."/>
            <person name="Hildebrandt F."/>
            <person name="Otto E."/>
            <person name="Johnson C.A."/>
            <person name="Szymanska K."/>
            <person name="Katsanis N."/>
            <person name="Davis E."/>
            <person name="Kleta R."/>
            <person name="Hubank M."/>
            <person name="Doxsey S."/>
            <person name="Jackson A."/>
            <person name="Stupka E."/>
            <person name="Winey M."/>
            <person name="Beales P.L."/>
        </authorList>
    </citation>
    <scope>INVOLVEMENT IN STROMS</scope>
</reference>
<reference key="25">
    <citation type="journal article" date="2016" name="Hum. Mutat.">
        <title>Stroemme Syndrome Is a Ciliary Disorder Caused by Mutations in CENPF.</title>
        <authorList>
            <person name="Filges I."/>
            <person name="Bruder E."/>
            <person name="Brandal K."/>
            <person name="Meier S."/>
            <person name="Undlien D.E."/>
            <person name="Waage T.R."/>
            <person name="Hoesli I."/>
            <person name="Schubach M."/>
            <person name="de Beer T."/>
            <person name="Sheng Y."/>
            <person name="Hoeller S."/>
            <person name="Schulzke S."/>
            <person name="Roesby O."/>
            <person name="Miny P."/>
            <person name="Tercanli S."/>
            <person name="Oppedal T."/>
            <person name="Meyer P."/>
            <person name="Selmer K.K."/>
            <person name="Stroemme P."/>
        </authorList>
    </citation>
    <scope>INVOLVEMENT IN STROMS</scope>
</reference>
<feature type="chain" id="PRO_0000089477" description="Centromere protein F">
    <location>
        <begin position="1"/>
        <end position="3111"/>
    </location>
</feature>
<feature type="propeptide" id="PRO_0000396744" description="Removed in mature form" evidence="14">
    <location>
        <begin position="3112"/>
        <end position="3114"/>
    </location>
</feature>
<feature type="repeat" description="1">
    <location>
        <begin position="2111"/>
        <end position="2290"/>
    </location>
</feature>
<feature type="repeat" description="2">
    <location>
        <begin position="2293"/>
        <end position="2472"/>
    </location>
</feature>
<feature type="region of interest" description="Interaction with SNAP25 and required for localization to the cytoplasm" evidence="1">
    <location>
        <begin position="1"/>
        <end position="481"/>
    </location>
</feature>
<feature type="region of interest" description="Disordered" evidence="3">
    <location>
        <begin position="211"/>
        <end position="236"/>
    </location>
</feature>
<feature type="region of interest" description="Disordered" evidence="3">
    <location>
        <begin position="1667"/>
        <end position="1690"/>
    </location>
</feature>
<feature type="region of interest" description="Disordered" evidence="3">
    <location>
        <begin position="1710"/>
        <end position="1746"/>
    </location>
</feature>
<feature type="region of interest" description="Interaction with NDE1 and NDEL1" evidence="6">
    <location>
        <begin position="2026"/>
        <end position="2351"/>
    </location>
</feature>
<feature type="region of interest" description="2 X 177 AA tandem repeats">
    <location>
        <begin position="2111"/>
        <end position="2472"/>
    </location>
</feature>
<feature type="region of interest" description="Sufficient for centromere localization">
    <location>
        <begin position="2392"/>
        <end position="3017"/>
    </location>
</feature>
<feature type="region of interest" description="Sufficient for self-association">
    <location>
        <begin position="2392"/>
        <end position="2829"/>
    </location>
</feature>
<feature type="region of interest" description="Sufficient for nuclear localization">
    <location>
        <begin position="2831"/>
        <end position="3017"/>
    </location>
</feature>
<feature type="region of interest" description="Disordered" evidence="3">
    <location>
        <begin position="2891"/>
        <end position="2977"/>
    </location>
</feature>
<feature type="region of interest" description="Disordered" evidence="3">
    <location>
        <begin position="3024"/>
        <end position="3114"/>
    </location>
</feature>
<feature type="coiled-coil region" evidence="2">
    <location>
        <begin position="13"/>
        <end position="131"/>
    </location>
</feature>
<feature type="coiled-coil region" evidence="2">
    <location>
        <begin position="280"/>
        <end position="685"/>
    </location>
</feature>
<feature type="coiled-coil region" evidence="2">
    <location>
        <begin position="899"/>
        <end position="989"/>
    </location>
</feature>
<feature type="coiled-coil region" evidence="2">
    <location>
        <begin position="1196"/>
        <end position="1244"/>
    </location>
</feature>
<feature type="coiled-coil region" evidence="2">
    <location>
        <begin position="1549"/>
        <end position="1646"/>
    </location>
</feature>
<feature type="coiled-coil region" evidence="2">
    <location>
        <begin position="1890"/>
        <end position="2078"/>
    </location>
</feature>
<feature type="coiled-coil region" evidence="2">
    <location>
        <begin position="2107"/>
        <end position="2891"/>
    </location>
</feature>
<feature type="short sequence motif" description="Nuclear localization signal" evidence="2">
    <location>
        <begin position="2919"/>
        <end position="2936"/>
    </location>
</feature>
<feature type="compositionally biased region" description="Polar residues" evidence="3">
    <location>
        <begin position="211"/>
        <end position="235"/>
    </location>
</feature>
<feature type="compositionally biased region" description="Basic and acidic residues" evidence="3">
    <location>
        <begin position="1669"/>
        <end position="1690"/>
    </location>
</feature>
<feature type="compositionally biased region" description="Polar residues" evidence="3">
    <location>
        <begin position="3033"/>
        <end position="3045"/>
    </location>
</feature>
<feature type="compositionally biased region" description="Basic and acidic residues" evidence="3">
    <location>
        <begin position="3079"/>
        <end position="3089"/>
    </location>
</feature>
<feature type="compositionally biased region" description="Polar residues" evidence="3">
    <location>
        <begin position="3105"/>
        <end position="3114"/>
    </location>
</feature>
<feature type="modified residue" description="Phosphoserine" evidence="18 23">
    <location>
        <position position="106"/>
    </location>
</feature>
<feature type="modified residue" description="Phosphothreonine" evidence="18">
    <location>
        <position position="144"/>
    </location>
</feature>
<feature type="modified residue" description="Phosphothreonine" evidence="21">
    <location>
        <position position="151"/>
    </location>
</feature>
<feature type="modified residue" description="Phosphothreonine" evidence="21 23">
    <location>
        <position position="154"/>
    </location>
</feature>
<feature type="modified residue" description="Phosphotyrosine" evidence="21">
    <location>
        <position position="158"/>
    </location>
</feature>
<feature type="modified residue" description="Phosphoserine" evidence="23">
    <location>
        <position position="242"/>
    </location>
</feature>
<feature type="modified residue" description="Phosphoserine" evidence="21 23">
    <location>
        <position position="276"/>
    </location>
</feature>
<feature type="modified residue" description="Phosphoserine" evidence="21">
    <location>
        <position position="773"/>
    </location>
</feature>
<feature type="modified residue" description="Phosphoserine" evidence="21">
    <location>
        <position position="783"/>
    </location>
</feature>
<feature type="modified residue" description="Phosphoserine" evidence="21 23">
    <location>
        <position position="821"/>
    </location>
</feature>
<feature type="modified residue" description="Phosphoserine" evidence="18">
    <location>
        <position position="834"/>
    </location>
</feature>
<feature type="modified residue" description="Phosphoserine" evidence="23">
    <location>
        <position position="838"/>
    </location>
</feature>
<feature type="modified residue" description="Phosphoserine" evidence="21 23">
    <location>
        <position position="876"/>
    </location>
</feature>
<feature type="modified residue" description="Phosphoserine" evidence="18 21">
    <location>
        <position position="1248"/>
    </location>
</feature>
<feature type="modified residue" description="Phosphoserine" evidence="21 23">
    <location>
        <position position="1255"/>
    </location>
</feature>
<feature type="modified residue" description="Phosphoserine" evidence="21">
    <location>
        <position position="1259"/>
    </location>
</feature>
<feature type="modified residue" description="Phosphoserine" evidence="15 18 21 23">
    <location>
        <position position="1651"/>
    </location>
</feature>
<feature type="modified residue" description="Phosphoserine" evidence="18">
    <location>
        <position position="1652"/>
    </location>
</feature>
<feature type="modified residue" description="Phosphoserine" evidence="15 18 21 23">
    <location>
        <position position="1654"/>
    </location>
</feature>
<feature type="modified residue" description="Phosphoserine" evidence="23">
    <location>
        <position position="1726"/>
    </location>
</feature>
<feature type="modified residue" description="Phosphothreonine" evidence="23">
    <location>
        <position position="1862"/>
    </location>
</feature>
<feature type="modified residue" description="Phosphoserine" evidence="23">
    <location>
        <position position="1868"/>
    </location>
</feature>
<feature type="modified residue" description="Phosphoserine" evidence="21">
    <location>
        <position position="1892"/>
    </location>
</feature>
<feature type="modified residue" description="Phosphoserine" evidence="18">
    <location>
        <position position="2416"/>
    </location>
</feature>
<feature type="modified residue" description="Phosphoserine" evidence="18 21">
    <location>
        <position position="2417"/>
    </location>
</feature>
<feature type="modified residue" description="N6-acetyllysine" evidence="19">
    <location>
        <position position="2779"/>
    </location>
</feature>
<feature type="modified residue" description="Phosphoserine" evidence="18 20 21">
    <location>
        <position position="2900"/>
    </location>
</feature>
<feature type="modified residue" description="Phosphoserine" evidence="18 20 21">
    <location>
        <position position="2911"/>
    </location>
</feature>
<feature type="modified residue" description="Phosphoserine" evidence="21">
    <location>
        <position position="2922"/>
    </location>
</feature>
<feature type="modified residue" description="Phosphoserine" evidence="23">
    <location>
        <position position="2936"/>
    </location>
</feature>
<feature type="modified residue" description="Phosphothreonine" evidence="21 23">
    <location>
        <position position="2949"/>
    </location>
</feature>
<feature type="modified residue" description="Phosphoserine" evidence="21">
    <location>
        <position position="2952"/>
    </location>
</feature>
<feature type="modified residue" description="Phosphoserine" evidence="21 23">
    <location>
        <position position="2998"/>
    </location>
</feature>
<feature type="modified residue" description="Phosphoserine" evidence="16 18 21 22 23">
    <location>
        <position position="3023"/>
    </location>
</feature>
<feature type="modified residue" description="Phosphoserine" evidence="18 21">
    <location>
        <position position="3026"/>
    </location>
</feature>
<feature type="modified residue" description="Phosphoserine" evidence="17 18 21 22 23">
    <location>
        <position position="3054"/>
    </location>
</feature>
<feature type="modified residue" description="Phosphoserine" evidence="18 21 23">
    <location>
        <position position="3079"/>
    </location>
</feature>
<feature type="modified residue" description="Phosphoserine" evidence="18 21">
    <location>
        <position position="3083"/>
    </location>
</feature>
<feature type="modified residue" description="Cysteine methyl ester" evidence="14">
    <location>
        <position position="3111"/>
    </location>
</feature>
<feature type="lipid moiety-binding region" description="S-farnesyl cysteine" evidence="4">
    <location>
        <position position="3111"/>
    </location>
</feature>
<feature type="sequence variant" id="VAR_055049" description="In dbSNP:rs1050065." evidence="9">
    <original>Q</original>
    <variation>L</variation>
    <location>
        <position position="250"/>
    </location>
</feature>
<feature type="sequence variant" id="VAR_055050" description="In dbSNP:rs1050066." evidence="9">
    <original>D</original>
    <variation>G</variation>
    <location>
        <position position="272"/>
    </location>
</feature>
<feature type="sequence variant" id="VAR_034712" description="In dbSNP:rs17023281.">
    <original>R</original>
    <variation>C</variation>
    <location>
        <position position="300"/>
    </location>
</feature>
<feature type="sequence variant" id="VAR_034713" description="In dbSNP:rs2070065.">
    <original>H</original>
    <variation>Q</variation>
    <location>
        <position position="494"/>
    </location>
</feature>
<feature type="sequence variant" id="VAR_034714" description="In dbSNP:rs3795524.">
    <original>M</original>
    <variation>V</variation>
    <location>
        <position position="701"/>
    </location>
</feature>
<feature type="sequence variant" id="VAR_034715" description="In dbSNP:rs3795523.">
    <original>Q</original>
    <variation>E</variation>
    <location>
        <position position="754"/>
    </location>
</feature>
<feature type="sequence variant" id="VAR_034716" description="In dbSNP:rs3795522.">
    <original>R</original>
    <variation>H</variation>
    <location>
        <position position="815"/>
    </location>
</feature>
<feature type="sequence variant" id="VAR_034717" description="In dbSNP:rs3795519.">
    <original>Y</original>
    <variation>D</variation>
    <location>
        <position position="1018"/>
    </location>
</feature>
<feature type="sequence variant" id="VAR_034718" description="In dbSNP:rs3795518.">
    <original>G</original>
    <variation>R</variation>
    <location>
        <position position="1033"/>
    </location>
</feature>
<feature type="sequence variant" id="VAR_034719" description="In dbSNP:rs12067133.">
    <original>T</original>
    <variation>I</variation>
    <location>
        <position position="1105"/>
    </location>
</feature>
<feature type="sequence variant" id="VAR_034720" description="In dbSNP:rs3795517.">
    <original>L</original>
    <variation>S</variation>
    <location>
        <position position="1412"/>
    </location>
</feature>
<feature type="sequence variant" id="VAR_055638" description="In dbSNP:rs3748692.">
    <original>D</original>
    <variation>N</variation>
    <location>
        <position position="1768"/>
    </location>
</feature>
<feature type="sequence variant" id="VAR_034723" description="In dbSNP:rs3790647.">
    <original>E</original>
    <variation>A</variation>
    <location>
        <position position="1915"/>
    </location>
</feature>
<feature type="sequence variant" id="VAR_014839" description="In dbSNP:rs7289." evidence="9 10 12">
    <original>N</original>
    <variation>K</variation>
    <location>
        <position position="3106"/>
    </location>
</feature>
<feature type="sequence conflict" description="In Ref. 1; AAA82889." evidence="14" ref="1">
    <original>A</original>
    <variation>T</variation>
    <location>
        <position position="16"/>
    </location>
</feature>
<feature type="sequence conflict" description="In Ref. 1; AAA82889 and 2; AAA82935." evidence="14" ref="1 2">
    <original>L</original>
    <variation>P</variation>
    <location>
        <position position="48"/>
    </location>
</feature>
<feature type="sequence conflict" description="In Ref. 1; AAA82889 and 2; AAA82935." evidence="14" ref="1 2">
    <original>K</original>
    <variation>T</variation>
    <location>
        <position position="52"/>
    </location>
</feature>
<feature type="sequence conflict" description="In Ref. 2; AAA82935." evidence="14" ref="2">
    <location>
        <position position="611"/>
    </location>
</feature>
<feature type="sequence conflict" description="In Ref. 1; AAA82889." evidence="14" ref="1">
    <original>A</original>
    <variation>V</variation>
    <location>
        <position position="1515"/>
    </location>
</feature>
<feature type="sequence conflict" description="In Ref. 2; AAA82935." evidence="14" ref="2">
    <original>V</original>
    <variation>L</variation>
    <location>
        <position position="1715"/>
    </location>
</feature>
<feature type="sequence conflict" description="In Ref. 5; AAA86889." evidence="14" ref="5">
    <original>ER</original>
    <variation>DG</variation>
    <location>
        <begin position="2146"/>
        <end position="2147"/>
    </location>
</feature>
<feature type="sequence conflict" description="In Ref. 5; AAA86889." evidence="14" ref="5">
    <original>L</original>
    <variation>Q</variation>
    <location>
        <position position="2239"/>
    </location>
</feature>
<feature type="sequence conflict" description="In Ref. 1; AAA82889 and 5; AAA86889." evidence="14" ref="1 5">
    <original>N</original>
    <variation>D</variation>
    <location>
        <position position="2396"/>
    </location>
</feature>
<feature type="sequence conflict" description="In Ref. 5; AAA86889." evidence="14" ref="5">
    <original>ELNERVAALHNDQEACK</original>
    <variation>SSMREWQPCIMTKKPVS</variation>
    <location>
        <begin position="2449"/>
        <end position="2465"/>
    </location>
</feature>
<feature type="sequence conflict" description="In Ref. 1; AAA82889, 2; AAA82935 and 5; AAA86889." evidence="14" ref="1 2 5">
    <original>R</original>
    <variation>G</variation>
    <location>
        <position position="2943"/>
    </location>
</feature>
<protein>
    <recommendedName>
        <fullName>Centromere protein F</fullName>
        <shortName>CENP-F</shortName>
    </recommendedName>
    <alternativeName>
        <fullName>AH antigen</fullName>
    </alternativeName>
    <alternativeName>
        <fullName>Kinetochore protein CENPF</fullName>
    </alternativeName>
    <alternativeName>
        <fullName>Mitosin</fullName>
    </alternativeName>
</protein>
<evidence type="ECO:0000250" key="1"/>
<evidence type="ECO:0000255" key="2"/>
<evidence type="ECO:0000256" key="3">
    <source>
        <dbReference type="SAM" id="MobiDB-lite"/>
    </source>
</evidence>
<evidence type="ECO:0000269" key="4">
    <source>
    </source>
</evidence>
<evidence type="ECO:0000269" key="5">
    <source>
    </source>
</evidence>
<evidence type="ECO:0000269" key="6">
    <source>
    </source>
</evidence>
<evidence type="ECO:0000269" key="7">
    <source>
    </source>
</evidence>
<evidence type="ECO:0000269" key="8">
    <source>
    </source>
</evidence>
<evidence type="ECO:0000269" key="9">
    <source>
    </source>
</evidence>
<evidence type="ECO:0000269" key="10">
    <source>
    </source>
</evidence>
<evidence type="ECO:0000269" key="11">
    <source>
    </source>
</evidence>
<evidence type="ECO:0000269" key="12">
    <source>
    </source>
</evidence>
<evidence type="ECO:0000269" key="13">
    <source>
    </source>
</evidence>
<evidence type="ECO:0000305" key="14"/>
<evidence type="ECO:0007744" key="15">
    <source>
    </source>
</evidence>
<evidence type="ECO:0007744" key="16">
    <source>
    </source>
</evidence>
<evidence type="ECO:0007744" key="17">
    <source>
    </source>
</evidence>
<evidence type="ECO:0007744" key="18">
    <source>
    </source>
</evidence>
<evidence type="ECO:0007744" key="19">
    <source>
    </source>
</evidence>
<evidence type="ECO:0007744" key="20">
    <source>
    </source>
</evidence>
<evidence type="ECO:0007744" key="21">
    <source>
    </source>
</evidence>
<evidence type="ECO:0007744" key="22">
    <source>
    </source>
</evidence>
<evidence type="ECO:0007744" key="23">
    <source>
    </source>
</evidence>
<organism>
    <name type="scientific">Homo sapiens</name>
    <name type="common">Human</name>
    <dbReference type="NCBI Taxonomy" id="9606"/>
    <lineage>
        <taxon>Eukaryota</taxon>
        <taxon>Metazoa</taxon>
        <taxon>Chordata</taxon>
        <taxon>Craniata</taxon>
        <taxon>Vertebrata</taxon>
        <taxon>Euteleostomi</taxon>
        <taxon>Mammalia</taxon>
        <taxon>Eutheria</taxon>
        <taxon>Euarchontoglires</taxon>
        <taxon>Primates</taxon>
        <taxon>Haplorrhini</taxon>
        <taxon>Catarrhini</taxon>
        <taxon>Hominidae</taxon>
        <taxon>Homo</taxon>
    </lineage>
</organism>
<accession>P49454</accession>
<accession>Q13171</accession>
<accession>Q13246</accession>
<accession>Q5VVM7</accession>
<gene>
    <name type="primary">CENPF</name>
</gene>
<proteinExistence type="evidence at protein level"/>
<dbReference type="EMBL" id="U19769">
    <property type="protein sequence ID" value="AAA82889.1"/>
    <property type="status" value="ALT_SEQ"/>
    <property type="molecule type" value="mRNA"/>
</dbReference>
<dbReference type="EMBL" id="U30872">
    <property type="protein sequence ID" value="AAA82935.1"/>
    <property type="molecule type" value="mRNA"/>
</dbReference>
<dbReference type="EMBL" id="AL445666">
    <property type="status" value="NOT_ANNOTATED_CDS"/>
    <property type="molecule type" value="Genomic_DNA"/>
</dbReference>
<dbReference type="EMBL" id="AL445305">
    <property type="status" value="NOT_ANNOTATED_CDS"/>
    <property type="molecule type" value="Genomic_DNA"/>
</dbReference>
<dbReference type="EMBL" id="BC172232">
    <property type="protein sequence ID" value="AAI72232.1"/>
    <property type="molecule type" value="mRNA"/>
</dbReference>
<dbReference type="EMBL" id="U25725">
    <property type="protein sequence ID" value="AAA86889.1"/>
    <property type="molecule type" value="mRNA"/>
</dbReference>
<dbReference type="CCDS" id="CCDS31023.1"/>
<dbReference type="PIR" id="PC4035">
    <property type="entry name" value="PC4035"/>
</dbReference>
<dbReference type="RefSeq" id="NP_057427.3">
    <property type="nucleotide sequence ID" value="NM_016343.3"/>
</dbReference>
<dbReference type="RefSeq" id="XP_016855575.1">
    <property type="nucleotide sequence ID" value="XM_017000086.3"/>
</dbReference>
<dbReference type="SMR" id="P49454"/>
<dbReference type="BioGRID" id="107492">
    <property type="interactions" value="130"/>
</dbReference>
<dbReference type="FunCoup" id="P49454">
    <property type="interactions" value="1112"/>
</dbReference>
<dbReference type="IntAct" id="P49454">
    <property type="interactions" value="69"/>
</dbReference>
<dbReference type="MINT" id="P49454"/>
<dbReference type="STRING" id="9606.ENSP00000355922"/>
<dbReference type="CarbonylDB" id="P49454"/>
<dbReference type="GlyCosmos" id="P49454">
    <property type="glycosylation" value="1 site, 1 glycan"/>
</dbReference>
<dbReference type="GlyGen" id="P49454">
    <property type="glycosylation" value="11 sites, 2 N-linked glycans (2 sites), 2 O-linked glycans (7 sites)"/>
</dbReference>
<dbReference type="iPTMnet" id="P49454"/>
<dbReference type="MetOSite" id="P49454"/>
<dbReference type="PhosphoSitePlus" id="P49454"/>
<dbReference type="SwissPalm" id="P49454"/>
<dbReference type="BioMuta" id="CENPF"/>
<dbReference type="DMDM" id="156630875"/>
<dbReference type="jPOST" id="P49454"/>
<dbReference type="MassIVE" id="P49454"/>
<dbReference type="PaxDb" id="9606-ENSP00000355922"/>
<dbReference type="PeptideAtlas" id="P49454"/>
<dbReference type="ProteomicsDB" id="56015"/>
<dbReference type="Pumba" id="P49454"/>
<dbReference type="Antibodypedia" id="4038">
    <property type="antibodies" value="292 antibodies from 36 providers"/>
</dbReference>
<dbReference type="DNASU" id="1063"/>
<dbReference type="Ensembl" id="ENST00000366955.8">
    <property type="protein sequence ID" value="ENSP00000355922.3"/>
    <property type="gene ID" value="ENSG00000117724.15"/>
</dbReference>
<dbReference type="GeneID" id="1063"/>
<dbReference type="KEGG" id="hsa:1063"/>
<dbReference type="MANE-Select" id="ENST00000366955.8">
    <property type="protein sequence ID" value="ENSP00000355922.3"/>
    <property type="RefSeq nucleotide sequence ID" value="NM_016343.4"/>
    <property type="RefSeq protein sequence ID" value="NP_057427.3"/>
</dbReference>
<dbReference type="UCSC" id="uc001hkm.4">
    <property type="organism name" value="human"/>
</dbReference>
<dbReference type="AGR" id="HGNC:1857"/>
<dbReference type="CTD" id="1063"/>
<dbReference type="DisGeNET" id="1063"/>
<dbReference type="GeneCards" id="CENPF"/>
<dbReference type="GeneReviews" id="CENPF"/>
<dbReference type="HGNC" id="HGNC:1857">
    <property type="gene designation" value="CENPF"/>
</dbReference>
<dbReference type="HPA" id="ENSG00000117724">
    <property type="expression patterns" value="Group enriched (bone marrow, lymphoid tissue, testis)"/>
</dbReference>
<dbReference type="MalaCards" id="CENPF"/>
<dbReference type="MIM" id="243605">
    <property type="type" value="phenotype"/>
</dbReference>
<dbReference type="MIM" id="600236">
    <property type="type" value="gene"/>
</dbReference>
<dbReference type="neXtProt" id="NX_P49454"/>
<dbReference type="OpenTargets" id="ENSG00000117724"/>
<dbReference type="Orphanet" id="444069">
    <property type="disease" value="Lethal fetal brain malformation-duodenal atresia-bilateral renal hypoplasia syndrome"/>
</dbReference>
<dbReference type="Orphanet" id="506307">
    <property type="disease" value="Stromme syndrome"/>
</dbReference>
<dbReference type="PharmGKB" id="PA26401"/>
<dbReference type="VEuPathDB" id="HostDB:ENSG00000117724"/>
<dbReference type="eggNOG" id="ENOG502QVMD">
    <property type="taxonomic scope" value="Eukaryota"/>
</dbReference>
<dbReference type="GeneTree" id="ENSGT00730000111187"/>
<dbReference type="HOGENOM" id="CLU_000551_0_0_1"/>
<dbReference type="InParanoid" id="P49454"/>
<dbReference type="OMA" id="EQPNEQH"/>
<dbReference type="OrthoDB" id="10255522at2759"/>
<dbReference type="PAN-GO" id="P49454">
    <property type="GO annotations" value="7 GO annotations based on evolutionary models"/>
</dbReference>
<dbReference type="PhylomeDB" id="P49454"/>
<dbReference type="TreeFam" id="TF101133"/>
<dbReference type="PathwayCommons" id="P49454"/>
<dbReference type="Reactome" id="R-HSA-141444">
    <property type="pathway name" value="Amplification of signal from unattached kinetochores via a MAD2 inhibitory signal"/>
</dbReference>
<dbReference type="Reactome" id="R-HSA-156711">
    <property type="pathway name" value="Polo-like kinase mediated events"/>
</dbReference>
<dbReference type="Reactome" id="R-HSA-2467813">
    <property type="pathway name" value="Separation of Sister Chromatids"/>
</dbReference>
<dbReference type="Reactome" id="R-HSA-2500257">
    <property type="pathway name" value="Resolution of Sister Chromatid Cohesion"/>
</dbReference>
<dbReference type="Reactome" id="R-HSA-5663220">
    <property type="pathway name" value="RHO GTPases Activate Formins"/>
</dbReference>
<dbReference type="Reactome" id="R-HSA-68877">
    <property type="pathway name" value="Mitotic Prometaphase"/>
</dbReference>
<dbReference type="Reactome" id="R-HSA-9648025">
    <property type="pathway name" value="EML4 and NUDC in mitotic spindle formation"/>
</dbReference>
<dbReference type="SignaLink" id="P49454"/>
<dbReference type="SIGNOR" id="P49454"/>
<dbReference type="BioGRID-ORCS" id="1063">
    <property type="hits" value="69 hits in 1186 CRISPR screens"/>
</dbReference>
<dbReference type="CD-CODE" id="8C2F96ED">
    <property type="entry name" value="Centrosome"/>
</dbReference>
<dbReference type="ChiTaRS" id="CENPF">
    <property type="organism name" value="human"/>
</dbReference>
<dbReference type="GeneWiki" id="CENPF"/>
<dbReference type="GenomeRNAi" id="1063"/>
<dbReference type="Pharos" id="P49454">
    <property type="development level" value="Tbio"/>
</dbReference>
<dbReference type="PRO" id="PR:P49454"/>
<dbReference type="Proteomes" id="UP000005640">
    <property type="component" value="Chromosome 1"/>
</dbReference>
<dbReference type="RNAct" id="P49454">
    <property type="molecule type" value="protein"/>
</dbReference>
<dbReference type="Bgee" id="ENSG00000117724">
    <property type="expression patterns" value="Expressed in ventricular zone and 139 other cell types or tissues"/>
</dbReference>
<dbReference type="ExpressionAtlas" id="P49454">
    <property type="expression patterns" value="baseline and differential"/>
</dbReference>
<dbReference type="GO" id="GO:0005930">
    <property type="term" value="C:axoneme"/>
    <property type="evidence" value="ECO:0007669"/>
    <property type="project" value="Ensembl"/>
</dbReference>
<dbReference type="GO" id="GO:0005813">
    <property type="term" value="C:centrosome"/>
    <property type="evidence" value="ECO:0007669"/>
    <property type="project" value="Ensembl"/>
</dbReference>
<dbReference type="GO" id="GO:0000785">
    <property type="term" value="C:chromatin"/>
    <property type="evidence" value="ECO:0000303"/>
    <property type="project" value="UniProtKB"/>
</dbReference>
<dbReference type="GO" id="GO:0000775">
    <property type="term" value="C:chromosome, centromeric region"/>
    <property type="evidence" value="ECO:0000314"/>
    <property type="project" value="UniProtKB"/>
</dbReference>
<dbReference type="GO" id="GO:0036064">
    <property type="term" value="C:ciliary basal body"/>
    <property type="evidence" value="ECO:0007669"/>
    <property type="project" value="Ensembl"/>
</dbReference>
<dbReference type="GO" id="GO:0097539">
    <property type="term" value="C:ciliary transition fiber"/>
    <property type="evidence" value="ECO:0000315"/>
    <property type="project" value="GO_Central"/>
</dbReference>
<dbReference type="GO" id="GO:0005737">
    <property type="term" value="C:cytoplasm"/>
    <property type="evidence" value="ECO:0000314"/>
    <property type="project" value="UniProtKB"/>
</dbReference>
<dbReference type="GO" id="GO:0005829">
    <property type="term" value="C:cytosol"/>
    <property type="evidence" value="ECO:0000304"/>
    <property type="project" value="Reactome"/>
</dbReference>
<dbReference type="GO" id="GO:0000776">
    <property type="term" value="C:kinetochore"/>
    <property type="evidence" value="ECO:0000314"/>
    <property type="project" value="UniProtKB"/>
</dbReference>
<dbReference type="GO" id="GO:0030496">
    <property type="term" value="C:midbody"/>
    <property type="evidence" value="ECO:0000314"/>
    <property type="project" value="UniProtKB"/>
</dbReference>
<dbReference type="GO" id="GO:0005635">
    <property type="term" value="C:nuclear envelope"/>
    <property type="evidence" value="ECO:0000314"/>
    <property type="project" value="UniProtKB"/>
</dbReference>
<dbReference type="GO" id="GO:0016363">
    <property type="term" value="C:nuclear matrix"/>
    <property type="evidence" value="ECO:0000314"/>
    <property type="project" value="UniProtKB"/>
</dbReference>
<dbReference type="GO" id="GO:0005654">
    <property type="term" value="C:nucleoplasm"/>
    <property type="evidence" value="ECO:0000314"/>
    <property type="project" value="HPA"/>
</dbReference>
<dbReference type="GO" id="GO:0005634">
    <property type="term" value="C:nucleus"/>
    <property type="evidence" value="ECO:0000314"/>
    <property type="project" value="UniProtKB"/>
</dbReference>
<dbReference type="GO" id="GO:0000940">
    <property type="term" value="C:outer kinetochore"/>
    <property type="evidence" value="ECO:0000314"/>
    <property type="project" value="UniProtKB"/>
</dbReference>
<dbReference type="GO" id="GO:0048471">
    <property type="term" value="C:perinuclear region of cytoplasm"/>
    <property type="evidence" value="ECO:0007669"/>
    <property type="project" value="UniProtKB-SubCell"/>
</dbReference>
<dbReference type="GO" id="GO:0045120">
    <property type="term" value="C:pronucleus"/>
    <property type="evidence" value="ECO:0007669"/>
    <property type="project" value="Ensembl"/>
</dbReference>
<dbReference type="GO" id="GO:0005819">
    <property type="term" value="C:spindle"/>
    <property type="evidence" value="ECO:0000314"/>
    <property type="project" value="UniProtKB"/>
</dbReference>
<dbReference type="GO" id="GO:0000922">
    <property type="term" value="C:spindle pole"/>
    <property type="evidence" value="ECO:0000314"/>
    <property type="project" value="UniProtKB"/>
</dbReference>
<dbReference type="GO" id="GO:0003682">
    <property type="term" value="F:chromatin binding"/>
    <property type="evidence" value="ECO:0000303"/>
    <property type="project" value="UniProtKB"/>
</dbReference>
<dbReference type="GO" id="GO:0140297">
    <property type="term" value="F:DNA-binding transcription factor binding"/>
    <property type="evidence" value="ECO:0000353"/>
    <property type="project" value="UniProtKB"/>
</dbReference>
<dbReference type="GO" id="GO:0070840">
    <property type="term" value="F:dynein complex binding"/>
    <property type="evidence" value="ECO:0000314"/>
    <property type="project" value="UniProtKB"/>
</dbReference>
<dbReference type="GO" id="GO:0008017">
    <property type="term" value="F:microtubule binding"/>
    <property type="evidence" value="ECO:0007669"/>
    <property type="project" value="InterPro"/>
</dbReference>
<dbReference type="GO" id="GO:0042803">
    <property type="term" value="F:protein homodimerization activity"/>
    <property type="evidence" value="ECO:0000353"/>
    <property type="project" value="UniProtKB"/>
</dbReference>
<dbReference type="GO" id="GO:0030154">
    <property type="term" value="P:cell differentiation"/>
    <property type="evidence" value="ECO:0007669"/>
    <property type="project" value="UniProtKB-KW"/>
</dbReference>
<dbReference type="GO" id="GO:0051301">
    <property type="term" value="P:cell division"/>
    <property type="evidence" value="ECO:0007669"/>
    <property type="project" value="UniProtKB-KW"/>
</dbReference>
<dbReference type="GO" id="GO:0007059">
    <property type="term" value="P:chromosome segregation"/>
    <property type="evidence" value="ECO:0000315"/>
    <property type="project" value="UniProtKB"/>
</dbReference>
<dbReference type="GO" id="GO:0071897">
    <property type="term" value="P:DNA biosynthetic process"/>
    <property type="evidence" value="ECO:0007669"/>
    <property type="project" value="UniProtKB-KW"/>
</dbReference>
<dbReference type="GO" id="GO:0001822">
    <property type="term" value="P:kidney development"/>
    <property type="evidence" value="ECO:0000315"/>
    <property type="project" value="GO_Central"/>
</dbReference>
<dbReference type="GO" id="GO:0051382">
    <property type="term" value="P:kinetochore assembly"/>
    <property type="evidence" value="ECO:0000303"/>
    <property type="project" value="UniProtKB"/>
</dbReference>
<dbReference type="GO" id="GO:0051310">
    <property type="term" value="P:metaphase chromosome alignment"/>
    <property type="evidence" value="ECO:0000314"/>
    <property type="project" value="UniProtKB"/>
</dbReference>
<dbReference type="GO" id="GO:0000278">
    <property type="term" value="P:mitotic cell cycle"/>
    <property type="evidence" value="ECO:0000315"/>
    <property type="project" value="UniProtKB"/>
</dbReference>
<dbReference type="GO" id="GO:0007094">
    <property type="term" value="P:mitotic spindle assembly checkpoint signaling"/>
    <property type="evidence" value="ECO:0000303"/>
    <property type="project" value="UniProtKB"/>
</dbReference>
<dbReference type="GO" id="GO:0007517">
    <property type="term" value="P:muscle organ development"/>
    <property type="evidence" value="ECO:0007669"/>
    <property type="project" value="UniProtKB-KW"/>
</dbReference>
<dbReference type="GO" id="GO:0045892">
    <property type="term" value="P:negative regulation of DNA-templated transcription"/>
    <property type="evidence" value="ECO:0000314"/>
    <property type="project" value="UniProtKB"/>
</dbReference>
<dbReference type="GO" id="GO:0015031">
    <property type="term" value="P:protein transport"/>
    <property type="evidence" value="ECO:0000314"/>
    <property type="project" value="UniProtKB"/>
</dbReference>
<dbReference type="GO" id="GO:0010389">
    <property type="term" value="P:regulation of G2/M transition of mitotic cell cycle"/>
    <property type="evidence" value="ECO:0000315"/>
    <property type="project" value="UniProtKB"/>
</dbReference>
<dbReference type="GO" id="GO:0016202">
    <property type="term" value="P:regulation of striated muscle tissue development"/>
    <property type="evidence" value="ECO:0000250"/>
    <property type="project" value="UniProtKB"/>
</dbReference>
<dbReference type="GO" id="GO:0009410">
    <property type="term" value="P:response to xenobiotic stimulus"/>
    <property type="evidence" value="ECO:0000303"/>
    <property type="project" value="UniProtKB"/>
</dbReference>
<dbReference type="GO" id="GO:0021591">
    <property type="term" value="P:ventricular system development"/>
    <property type="evidence" value="ECO:0000315"/>
    <property type="project" value="GO_Central"/>
</dbReference>
<dbReference type="InterPro" id="IPR043513">
    <property type="entry name" value="Cenp-F"/>
</dbReference>
<dbReference type="InterPro" id="IPR018302">
    <property type="entry name" value="CenpF/LEK1_Rb-prot-bd"/>
</dbReference>
<dbReference type="InterPro" id="IPR019513">
    <property type="entry name" value="Centromere_CenpF_leu-rich_rpt"/>
</dbReference>
<dbReference type="InterPro" id="IPR018463">
    <property type="entry name" value="Centromere_CenpF_N"/>
</dbReference>
<dbReference type="PANTHER" id="PTHR18874:SF10">
    <property type="entry name" value="CENTROMERE PROTEIN F"/>
    <property type="match status" value="1"/>
</dbReference>
<dbReference type="PANTHER" id="PTHR18874">
    <property type="entry name" value="CMF/LEK/CENP CELL DIVISION-RELATED"/>
    <property type="match status" value="1"/>
</dbReference>
<dbReference type="Pfam" id="PF10490">
    <property type="entry name" value="CENP-F_C_Rb_bdg"/>
    <property type="match status" value="1"/>
</dbReference>
<dbReference type="Pfam" id="PF10473">
    <property type="entry name" value="CENP-F_leu_zip"/>
    <property type="match status" value="3"/>
</dbReference>
<dbReference type="Pfam" id="PF10481">
    <property type="entry name" value="CENP-F_N"/>
    <property type="match status" value="1"/>
</dbReference>